<protein>
    <recommendedName>
        <fullName evidence="1">tRNA modification GTPase MnmE</fullName>
        <ecNumber evidence="1">3.6.-.-</ecNumber>
    </recommendedName>
</protein>
<name>MNME_DICNV</name>
<reference key="1">
    <citation type="journal article" date="2007" name="Nat. Biotechnol.">
        <title>Genome sequence and identification of candidate vaccine antigens from the animal pathogen Dichelobacter nodosus.</title>
        <authorList>
            <person name="Myers G.S.A."/>
            <person name="Parker D."/>
            <person name="Al-Hasani K."/>
            <person name="Kennan R.M."/>
            <person name="Seemann T."/>
            <person name="Ren Q."/>
            <person name="Badger J.H."/>
            <person name="Selengut J.D."/>
            <person name="Deboy R.T."/>
            <person name="Tettelin H."/>
            <person name="Boyce J.D."/>
            <person name="McCarl V.P."/>
            <person name="Han X."/>
            <person name="Nelson W.C."/>
            <person name="Madupu R."/>
            <person name="Mohamoud Y."/>
            <person name="Holley T."/>
            <person name="Fedorova N."/>
            <person name="Khouri H."/>
            <person name="Bottomley S.P."/>
            <person name="Whittington R.J."/>
            <person name="Adler B."/>
            <person name="Songer J.G."/>
            <person name="Rood J.I."/>
            <person name="Paulsen I.T."/>
        </authorList>
    </citation>
    <scope>NUCLEOTIDE SEQUENCE [LARGE SCALE GENOMIC DNA]</scope>
    <source>
        <strain>VCS1703A</strain>
    </source>
</reference>
<dbReference type="EC" id="3.6.-.-" evidence="1"/>
<dbReference type="EMBL" id="CP000513">
    <property type="protein sequence ID" value="ABQ13445.1"/>
    <property type="molecule type" value="Genomic_DNA"/>
</dbReference>
<dbReference type="RefSeq" id="WP_012031261.1">
    <property type="nucleotide sequence ID" value="NC_009446.1"/>
</dbReference>
<dbReference type="SMR" id="A5EY43"/>
<dbReference type="STRING" id="246195.DNO_0948"/>
<dbReference type="KEGG" id="dno:DNO_0948"/>
<dbReference type="eggNOG" id="COG0486">
    <property type="taxonomic scope" value="Bacteria"/>
</dbReference>
<dbReference type="HOGENOM" id="CLU_019624_4_1_6"/>
<dbReference type="OrthoDB" id="9805918at2"/>
<dbReference type="Proteomes" id="UP000000248">
    <property type="component" value="Chromosome"/>
</dbReference>
<dbReference type="GO" id="GO:0005829">
    <property type="term" value="C:cytosol"/>
    <property type="evidence" value="ECO:0007669"/>
    <property type="project" value="TreeGrafter"/>
</dbReference>
<dbReference type="GO" id="GO:0005525">
    <property type="term" value="F:GTP binding"/>
    <property type="evidence" value="ECO:0007669"/>
    <property type="project" value="UniProtKB-UniRule"/>
</dbReference>
<dbReference type="GO" id="GO:0003924">
    <property type="term" value="F:GTPase activity"/>
    <property type="evidence" value="ECO:0007669"/>
    <property type="project" value="UniProtKB-UniRule"/>
</dbReference>
<dbReference type="GO" id="GO:0046872">
    <property type="term" value="F:metal ion binding"/>
    <property type="evidence" value="ECO:0007669"/>
    <property type="project" value="UniProtKB-KW"/>
</dbReference>
<dbReference type="GO" id="GO:0030488">
    <property type="term" value="P:tRNA methylation"/>
    <property type="evidence" value="ECO:0007669"/>
    <property type="project" value="TreeGrafter"/>
</dbReference>
<dbReference type="GO" id="GO:0002098">
    <property type="term" value="P:tRNA wobble uridine modification"/>
    <property type="evidence" value="ECO:0007669"/>
    <property type="project" value="TreeGrafter"/>
</dbReference>
<dbReference type="CDD" id="cd04164">
    <property type="entry name" value="trmE"/>
    <property type="match status" value="1"/>
</dbReference>
<dbReference type="CDD" id="cd14858">
    <property type="entry name" value="TrmE_N"/>
    <property type="match status" value="1"/>
</dbReference>
<dbReference type="FunFam" id="3.40.50.300:FF:001376">
    <property type="entry name" value="tRNA modification GTPase MnmE"/>
    <property type="match status" value="1"/>
</dbReference>
<dbReference type="Gene3D" id="3.40.50.300">
    <property type="entry name" value="P-loop containing nucleotide triphosphate hydrolases"/>
    <property type="match status" value="1"/>
</dbReference>
<dbReference type="Gene3D" id="3.30.1360.120">
    <property type="entry name" value="Probable tRNA modification gtpase trme, domain 1"/>
    <property type="match status" value="1"/>
</dbReference>
<dbReference type="Gene3D" id="1.20.120.430">
    <property type="entry name" value="tRNA modification GTPase MnmE domain 2"/>
    <property type="match status" value="1"/>
</dbReference>
<dbReference type="HAMAP" id="MF_00379">
    <property type="entry name" value="GTPase_MnmE"/>
    <property type="match status" value="1"/>
</dbReference>
<dbReference type="InterPro" id="IPR031168">
    <property type="entry name" value="G_TrmE"/>
</dbReference>
<dbReference type="InterPro" id="IPR006073">
    <property type="entry name" value="GTP-bd"/>
</dbReference>
<dbReference type="InterPro" id="IPR018948">
    <property type="entry name" value="GTP-bd_TrmE_N"/>
</dbReference>
<dbReference type="InterPro" id="IPR004520">
    <property type="entry name" value="GTPase_MnmE"/>
</dbReference>
<dbReference type="InterPro" id="IPR027368">
    <property type="entry name" value="MnmE_dom2"/>
</dbReference>
<dbReference type="InterPro" id="IPR025867">
    <property type="entry name" value="MnmE_helical"/>
</dbReference>
<dbReference type="InterPro" id="IPR027417">
    <property type="entry name" value="P-loop_NTPase"/>
</dbReference>
<dbReference type="InterPro" id="IPR005225">
    <property type="entry name" value="Small_GTP-bd"/>
</dbReference>
<dbReference type="InterPro" id="IPR027266">
    <property type="entry name" value="TrmE/GcvT_dom1"/>
</dbReference>
<dbReference type="NCBIfam" id="TIGR00450">
    <property type="entry name" value="mnmE_trmE_thdF"/>
    <property type="match status" value="1"/>
</dbReference>
<dbReference type="NCBIfam" id="NF003661">
    <property type="entry name" value="PRK05291.1-3"/>
    <property type="match status" value="1"/>
</dbReference>
<dbReference type="NCBIfam" id="TIGR00231">
    <property type="entry name" value="small_GTP"/>
    <property type="match status" value="1"/>
</dbReference>
<dbReference type="PANTHER" id="PTHR42714">
    <property type="entry name" value="TRNA MODIFICATION GTPASE GTPBP3"/>
    <property type="match status" value="1"/>
</dbReference>
<dbReference type="PANTHER" id="PTHR42714:SF2">
    <property type="entry name" value="TRNA MODIFICATION GTPASE GTPBP3, MITOCHONDRIAL"/>
    <property type="match status" value="1"/>
</dbReference>
<dbReference type="Pfam" id="PF01926">
    <property type="entry name" value="MMR_HSR1"/>
    <property type="match status" value="1"/>
</dbReference>
<dbReference type="Pfam" id="PF12631">
    <property type="entry name" value="MnmE_helical"/>
    <property type="match status" value="1"/>
</dbReference>
<dbReference type="Pfam" id="PF10396">
    <property type="entry name" value="TrmE_N"/>
    <property type="match status" value="1"/>
</dbReference>
<dbReference type="SUPFAM" id="SSF52540">
    <property type="entry name" value="P-loop containing nucleoside triphosphate hydrolases"/>
    <property type="match status" value="1"/>
</dbReference>
<dbReference type="SUPFAM" id="SSF116878">
    <property type="entry name" value="TrmE connector domain"/>
    <property type="match status" value="1"/>
</dbReference>
<dbReference type="PROSITE" id="PS51709">
    <property type="entry name" value="G_TRME"/>
    <property type="match status" value="1"/>
</dbReference>
<keyword id="KW-0963">Cytoplasm</keyword>
<keyword id="KW-0342">GTP-binding</keyword>
<keyword id="KW-0378">Hydrolase</keyword>
<keyword id="KW-0460">Magnesium</keyword>
<keyword id="KW-0479">Metal-binding</keyword>
<keyword id="KW-0547">Nucleotide-binding</keyword>
<keyword id="KW-0630">Potassium</keyword>
<keyword id="KW-1185">Reference proteome</keyword>
<keyword id="KW-0819">tRNA processing</keyword>
<evidence type="ECO:0000255" key="1">
    <source>
        <dbReference type="HAMAP-Rule" id="MF_00379"/>
    </source>
</evidence>
<feature type="chain" id="PRO_1000060036" description="tRNA modification GTPase MnmE">
    <location>
        <begin position="1"/>
        <end position="450"/>
    </location>
</feature>
<feature type="domain" description="TrmE-type G">
    <location>
        <begin position="216"/>
        <end position="373"/>
    </location>
</feature>
<feature type="binding site" evidence="1">
    <location>
        <position position="23"/>
    </location>
    <ligand>
        <name>(6S)-5-formyl-5,6,7,8-tetrahydrofolate</name>
        <dbReference type="ChEBI" id="CHEBI:57457"/>
    </ligand>
</feature>
<feature type="binding site" evidence="1">
    <location>
        <position position="81"/>
    </location>
    <ligand>
        <name>(6S)-5-formyl-5,6,7,8-tetrahydrofolate</name>
        <dbReference type="ChEBI" id="CHEBI:57457"/>
    </ligand>
</feature>
<feature type="binding site" evidence="1">
    <location>
        <position position="120"/>
    </location>
    <ligand>
        <name>(6S)-5-formyl-5,6,7,8-tetrahydrofolate</name>
        <dbReference type="ChEBI" id="CHEBI:57457"/>
    </ligand>
</feature>
<feature type="binding site" evidence="1">
    <location>
        <begin position="226"/>
        <end position="231"/>
    </location>
    <ligand>
        <name>GTP</name>
        <dbReference type="ChEBI" id="CHEBI:37565"/>
    </ligand>
</feature>
<feature type="binding site" evidence="1">
    <location>
        <position position="230"/>
    </location>
    <ligand>
        <name>Mg(2+)</name>
        <dbReference type="ChEBI" id="CHEBI:18420"/>
    </ligand>
</feature>
<feature type="binding site" evidence="1">
    <location>
        <begin position="245"/>
        <end position="251"/>
    </location>
    <ligand>
        <name>GTP</name>
        <dbReference type="ChEBI" id="CHEBI:37565"/>
    </ligand>
</feature>
<feature type="binding site" evidence="1">
    <location>
        <position position="251"/>
    </location>
    <ligand>
        <name>Mg(2+)</name>
        <dbReference type="ChEBI" id="CHEBI:18420"/>
    </ligand>
</feature>
<feature type="binding site" evidence="1">
    <location>
        <begin position="270"/>
        <end position="273"/>
    </location>
    <ligand>
        <name>GTP</name>
        <dbReference type="ChEBI" id="CHEBI:37565"/>
    </ligand>
</feature>
<feature type="binding site" evidence="1">
    <location>
        <begin position="337"/>
        <end position="340"/>
    </location>
    <ligand>
        <name>GTP</name>
        <dbReference type="ChEBI" id="CHEBI:37565"/>
    </ligand>
</feature>
<feature type="binding site" evidence="1">
    <location>
        <position position="450"/>
    </location>
    <ligand>
        <name>(6S)-5-formyl-5,6,7,8-tetrahydrofolate</name>
        <dbReference type="ChEBI" id="CHEBI:57457"/>
    </ligand>
</feature>
<proteinExistence type="inferred from homology"/>
<comment type="function">
    <text evidence="1">Exhibits a very high intrinsic GTPase hydrolysis rate. Involved in the addition of a carboxymethylaminomethyl (cmnm) group at the wobble position (U34) of certain tRNAs, forming tRNA-cmnm(5)s(2)U34.</text>
</comment>
<comment type="cofactor">
    <cofactor evidence="1">
        <name>K(+)</name>
        <dbReference type="ChEBI" id="CHEBI:29103"/>
    </cofactor>
    <text evidence="1">Binds 1 potassium ion per subunit.</text>
</comment>
<comment type="subunit">
    <text evidence="1">Homodimer. Heterotetramer of two MnmE and two MnmG subunits.</text>
</comment>
<comment type="subcellular location">
    <subcellularLocation>
        <location evidence="1">Cytoplasm</location>
    </subcellularLocation>
</comment>
<comment type="similarity">
    <text evidence="1">Belongs to the TRAFAC class TrmE-Era-EngA-EngB-Septin-like GTPase superfamily. TrmE GTPase family.</text>
</comment>
<gene>
    <name evidence="1" type="primary">mnmE</name>
    <name evidence="1" type="synonym">trmE</name>
    <name type="ordered locus">DNO_0948</name>
</gene>
<organism>
    <name type="scientific">Dichelobacter nodosus (strain VCS1703A)</name>
    <dbReference type="NCBI Taxonomy" id="246195"/>
    <lineage>
        <taxon>Bacteria</taxon>
        <taxon>Pseudomonadati</taxon>
        <taxon>Pseudomonadota</taxon>
        <taxon>Gammaproteobacteria</taxon>
        <taxon>Cardiobacteriales</taxon>
        <taxon>Cardiobacteriaceae</taxon>
        <taxon>Dichelobacter</taxon>
    </lineage>
</organism>
<sequence>MIANETIAAIATPPGIGGVCIIRISGAQAHAIAVNITHKKNLVPRQAILSHFYDLSGEQIDQGIVLYFPAPHSFTGEDVVELQGHGGIAVAHALLSATLDFGARLAHAGEFTQRAFLNDKLDLAQAEAVADLIHARSQDALRAANRSLQGVFSQKIDALADELLRLRVYVEASLDFSEDEIDFLGEGKIREKLVDSLQKTQQLLAQSQQGQLLNDGIHLVLAGKPNAGKSSLLNALLGEERAIVTPQAGTTRDIVREDWIIDGIPVHLSDTAGLRESQDLVEQEGIRRSFDAVKRADIVLLLADGSARDNDARAEFVSLQEELHQLAPHAQFLVVYNKADLVDEQTAGDGLWISAKTGAGIEILLKKIATLAGKNQHEETVFIARKRHIHALESVEAHLQRALQQLEQFFVAELVAEELRLAHLALGTITGTVSSDDLLDEIFSGFCIGK</sequence>
<accession>A5EY43</accession>